<reference key="1">
    <citation type="submission" date="2008-10" db="EMBL/GenBank/DDBJ databases">
        <title>The complete genome sequence of Helicobacter pylori strain P12.</title>
        <authorList>
            <person name="Fischer W."/>
            <person name="Windhager L."/>
            <person name="Karnholz A."/>
            <person name="Zeiller M."/>
            <person name="Zimmer R."/>
            <person name="Haas R."/>
        </authorList>
    </citation>
    <scope>NUCLEOTIDE SEQUENCE [LARGE SCALE GENOMIC DNA]</scope>
    <source>
        <strain>P12</strain>
    </source>
</reference>
<accession>B6JPA1</accession>
<keyword id="KW-0686">Riboflavin biosynthesis</keyword>
<keyword id="KW-0808">Transferase</keyword>
<proteinExistence type="inferred from homology"/>
<comment type="function">
    <text evidence="1">Catalyzes the formation of 6,7-dimethyl-8-ribityllumazine by condensation of 5-amino-6-(D-ribitylamino)uracil with 3,4-dihydroxy-2-butanone 4-phosphate. This is the penultimate step in the biosynthesis of riboflavin.</text>
</comment>
<comment type="catalytic activity">
    <reaction evidence="1">
        <text>(2S)-2-hydroxy-3-oxobutyl phosphate + 5-amino-6-(D-ribitylamino)uracil = 6,7-dimethyl-8-(1-D-ribityl)lumazine + phosphate + 2 H2O + H(+)</text>
        <dbReference type="Rhea" id="RHEA:26152"/>
        <dbReference type="ChEBI" id="CHEBI:15377"/>
        <dbReference type="ChEBI" id="CHEBI:15378"/>
        <dbReference type="ChEBI" id="CHEBI:15934"/>
        <dbReference type="ChEBI" id="CHEBI:43474"/>
        <dbReference type="ChEBI" id="CHEBI:58201"/>
        <dbReference type="ChEBI" id="CHEBI:58830"/>
        <dbReference type="EC" id="2.5.1.78"/>
    </reaction>
</comment>
<comment type="pathway">
    <text evidence="1">Cofactor biosynthesis; riboflavin biosynthesis; riboflavin from 2-hydroxy-3-oxobutyl phosphate and 5-amino-6-(D-ribitylamino)uracil: step 1/2.</text>
</comment>
<comment type="similarity">
    <text evidence="1">Belongs to the DMRL synthase family.</text>
</comment>
<dbReference type="EC" id="2.5.1.78" evidence="1"/>
<dbReference type="EMBL" id="CP001217">
    <property type="protein sequence ID" value="ACJ07162.1"/>
    <property type="molecule type" value="Genomic_DNA"/>
</dbReference>
<dbReference type="SMR" id="B6JPA1"/>
<dbReference type="KEGG" id="hpp:HPP12_0002"/>
<dbReference type="HOGENOM" id="CLU_089358_1_1_7"/>
<dbReference type="UniPathway" id="UPA00275">
    <property type="reaction ID" value="UER00404"/>
</dbReference>
<dbReference type="Proteomes" id="UP000008198">
    <property type="component" value="Chromosome"/>
</dbReference>
<dbReference type="GO" id="GO:0005829">
    <property type="term" value="C:cytosol"/>
    <property type="evidence" value="ECO:0007669"/>
    <property type="project" value="TreeGrafter"/>
</dbReference>
<dbReference type="GO" id="GO:0009349">
    <property type="term" value="C:riboflavin synthase complex"/>
    <property type="evidence" value="ECO:0007669"/>
    <property type="project" value="InterPro"/>
</dbReference>
<dbReference type="GO" id="GO:0000906">
    <property type="term" value="F:6,7-dimethyl-8-ribityllumazine synthase activity"/>
    <property type="evidence" value="ECO:0007669"/>
    <property type="project" value="UniProtKB-UniRule"/>
</dbReference>
<dbReference type="GO" id="GO:0009231">
    <property type="term" value="P:riboflavin biosynthetic process"/>
    <property type="evidence" value="ECO:0007669"/>
    <property type="project" value="UniProtKB-UniRule"/>
</dbReference>
<dbReference type="CDD" id="cd09209">
    <property type="entry name" value="Lumazine_synthase-I"/>
    <property type="match status" value="1"/>
</dbReference>
<dbReference type="FunFam" id="3.40.50.960:FF:000001">
    <property type="entry name" value="6,7-dimethyl-8-ribityllumazine synthase"/>
    <property type="match status" value="1"/>
</dbReference>
<dbReference type="Gene3D" id="3.40.50.960">
    <property type="entry name" value="Lumazine/riboflavin synthase"/>
    <property type="match status" value="1"/>
</dbReference>
<dbReference type="HAMAP" id="MF_00178">
    <property type="entry name" value="Lumazine_synth"/>
    <property type="match status" value="1"/>
</dbReference>
<dbReference type="InterPro" id="IPR034964">
    <property type="entry name" value="LS"/>
</dbReference>
<dbReference type="InterPro" id="IPR002180">
    <property type="entry name" value="LS/RS"/>
</dbReference>
<dbReference type="InterPro" id="IPR036467">
    <property type="entry name" value="LS/RS_sf"/>
</dbReference>
<dbReference type="NCBIfam" id="TIGR00114">
    <property type="entry name" value="lumazine-synth"/>
    <property type="match status" value="1"/>
</dbReference>
<dbReference type="PANTHER" id="PTHR21058:SF0">
    <property type="entry name" value="6,7-DIMETHYL-8-RIBITYLLUMAZINE SYNTHASE"/>
    <property type="match status" value="1"/>
</dbReference>
<dbReference type="PANTHER" id="PTHR21058">
    <property type="entry name" value="6,7-DIMETHYL-8-RIBITYLLUMAZINE SYNTHASE DMRL SYNTHASE LUMAZINE SYNTHASE"/>
    <property type="match status" value="1"/>
</dbReference>
<dbReference type="Pfam" id="PF00885">
    <property type="entry name" value="DMRL_synthase"/>
    <property type="match status" value="1"/>
</dbReference>
<dbReference type="SUPFAM" id="SSF52121">
    <property type="entry name" value="Lumazine synthase"/>
    <property type="match status" value="1"/>
</dbReference>
<name>RISB_HELP2</name>
<feature type="chain" id="PRO_1000098196" description="6,7-dimethyl-8-ribityllumazine synthase">
    <location>
        <begin position="1"/>
        <end position="156"/>
    </location>
</feature>
<feature type="active site" description="Proton donor" evidence="1">
    <location>
        <position position="89"/>
    </location>
</feature>
<feature type="binding site" evidence="1">
    <location>
        <position position="23"/>
    </location>
    <ligand>
        <name>5-amino-6-(D-ribitylamino)uracil</name>
        <dbReference type="ChEBI" id="CHEBI:15934"/>
    </ligand>
</feature>
<feature type="binding site" evidence="1">
    <location>
        <begin position="57"/>
        <end position="59"/>
    </location>
    <ligand>
        <name>5-amino-6-(D-ribitylamino)uracil</name>
        <dbReference type="ChEBI" id="CHEBI:15934"/>
    </ligand>
</feature>
<feature type="binding site" evidence="1">
    <location>
        <begin position="81"/>
        <end position="83"/>
    </location>
    <ligand>
        <name>5-amino-6-(D-ribitylamino)uracil</name>
        <dbReference type="ChEBI" id="CHEBI:15934"/>
    </ligand>
</feature>
<feature type="binding site" evidence="1">
    <location>
        <begin position="86"/>
        <end position="87"/>
    </location>
    <ligand>
        <name>(2S)-2-hydroxy-3-oxobutyl phosphate</name>
        <dbReference type="ChEBI" id="CHEBI:58830"/>
    </ligand>
</feature>
<feature type="binding site" evidence="1">
    <location>
        <position position="114"/>
    </location>
    <ligand>
        <name>5-amino-6-(D-ribitylamino)uracil</name>
        <dbReference type="ChEBI" id="CHEBI:15934"/>
    </ligand>
</feature>
<feature type="binding site" evidence="1">
    <location>
        <position position="128"/>
    </location>
    <ligand>
        <name>(2S)-2-hydroxy-3-oxobutyl phosphate</name>
        <dbReference type="ChEBI" id="CHEBI:58830"/>
    </ligand>
</feature>
<gene>
    <name evidence="1" type="primary">ribH</name>
    <name type="ordered locus">HPP12_0002</name>
</gene>
<protein>
    <recommendedName>
        <fullName evidence="1">6,7-dimethyl-8-ribityllumazine synthase</fullName>
        <shortName evidence="1">DMRL synthase</shortName>
        <shortName evidence="1">LS</shortName>
        <shortName evidence="1">Lumazine synthase</shortName>
        <ecNumber evidence="1">2.5.1.78</ecNumber>
    </recommendedName>
</protein>
<sequence length="156" mass="16941">MRIIEGKLQLQGNEKVAILTSRFNHIITDRLKEGAMDCFKRHGGDEDLLDIVLVPGAYELPFILERLLGSGKYDGVCVLGAIIRGGTPHFDYVSAEATKGIAHAMLKYSMPVSFGVLTTDNIEQAIERAGSKAGNKGFEAMSTLIELLSLCQTLKG</sequence>
<organism>
    <name type="scientific">Helicobacter pylori (strain P12)</name>
    <dbReference type="NCBI Taxonomy" id="570508"/>
    <lineage>
        <taxon>Bacteria</taxon>
        <taxon>Pseudomonadati</taxon>
        <taxon>Campylobacterota</taxon>
        <taxon>Epsilonproteobacteria</taxon>
        <taxon>Campylobacterales</taxon>
        <taxon>Helicobacteraceae</taxon>
        <taxon>Helicobacter</taxon>
    </lineage>
</organism>
<evidence type="ECO:0000255" key="1">
    <source>
        <dbReference type="HAMAP-Rule" id="MF_00178"/>
    </source>
</evidence>